<reference key="1">
    <citation type="journal article" date="1996" name="Yeast">
        <title>The DNA sequence of cosmid 14-5 from chromosome XIV reveals 21 open reading frames including a novel gene encoding a globin-like domain.</title>
        <authorList>
            <person name="Pandolfo D."/>
            <person name="de Antoni A."/>
            <person name="Lanfranchi G."/>
            <person name="Valle G."/>
        </authorList>
    </citation>
    <scope>NUCLEOTIDE SEQUENCE [GENOMIC DNA]</scope>
</reference>
<reference key="2">
    <citation type="journal article" date="1997" name="Nature">
        <title>The nucleotide sequence of Saccharomyces cerevisiae chromosome XIV and its evolutionary implications.</title>
        <authorList>
            <person name="Philippsen P."/>
            <person name="Kleine K."/>
            <person name="Poehlmann R."/>
            <person name="Duesterhoeft A."/>
            <person name="Hamberg K."/>
            <person name="Hegemann J.H."/>
            <person name="Obermaier B."/>
            <person name="Urrestarazu L.A."/>
            <person name="Aert R."/>
            <person name="Albermann K."/>
            <person name="Altmann R."/>
            <person name="Andre B."/>
            <person name="Baladron V."/>
            <person name="Ballesta J.P.G."/>
            <person name="Becam A.-M."/>
            <person name="Beinhauer J.D."/>
            <person name="Boskovic J."/>
            <person name="Buitrago M.J."/>
            <person name="Bussereau F."/>
            <person name="Coster F."/>
            <person name="Crouzet M."/>
            <person name="D'Angelo M."/>
            <person name="Dal Pero F."/>
            <person name="De Antoni A."/>
            <person name="del Rey F."/>
            <person name="Doignon F."/>
            <person name="Domdey H."/>
            <person name="Dubois E."/>
            <person name="Fiedler T.A."/>
            <person name="Fleig U."/>
            <person name="Floeth M."/>
            <person name="Fritz C."/>
            <person name="Gaillardin C."/>
            <person name="Garcia-Cantalejo J.M."/>
            <person name="Glansdorff N."/>
            <person name="Goffeau A."/>
            <person name="Gueldener U."/>
            <person name="Herbert C.J."/>
            <person name="Heumann K."/>
            <person name="Heuss-Neitzel D."/>
            <person name="Hilbert H."/>
            <person name="Hinni K."/>
            <person name="Iraqui Houssaini I."/>
            <person name="Jacquet M."/>
            <person name="Jimenez A."/>
            <person name="Jonniaux J.-L."/>
            <person name="Karpfinger-Hartl L."/>
            <person name="Lanfranchi G."/>
            <person name="Lepingle A."/>
            <person name="Levesque H."/>
            <person name="Lyck R."/>
            <person name="Maftahi M."/>
            <person name="Mallet L."/>
            <person name="Maurer C.T.C."/>
            <person name="Messenguy F."/>
            <person name="Mewes H.-W."/>
            <person name="Moestl D."/>
            <person name="Nasr F."/>
            <person name="Nicaud J.-M."/>
            <person name="Niedenthal R.K."/>
            <person name="Pandolfo D."/>
            <person name="Pierard A."/>
            <person name="Piravandi E."/>
            <person name="Planta R.J."/>
            <person name="Pohl T.M."/>
            <person name="Purnelle B."/>
            <person name="Rebischung C."/>
            <person name="Remacha M.A."/>
            <person name="Revuelta J.L."/>
            <person name="Rinke M."/>
            <person name="Saiz J.E."/>
            <person name="Sartorello F."/>
            <person name="Scherens B."/>
            <person name="Sen-Gupta M."/>
            <person name="Soler-Mira A."/>
            <person name="Urbanus J.H.M."/>
            <person name="Valle G."/>
            <person name="Van Dyck L."/>
            <person name="Verhasselt P."/>
            <person name="Vierendeels F."/>
            <person name="Vissers S."/>
            <person name="Voet M."/>
            <person name="Volckaert G."/>
            <person name="Wach A."/>
            <person name="Wambutt R."/>
            <person name="Wedler H."/>
            <person name="Zollner A."/>
            <person name="Hani J."/>
        </authorList>
    </citation>
    <scope>NUCLEOTIDE SEQUENCE [LARGE SCALE GENOMIC DNA]</scope>
    <source>
        <strain>ATCC 204508 / S288c</strain>
    </source>
</reference>
<reference key="3">
    <citation type="journal article" date="2014" name="G3 (Bethesda)">
        <title>The reference genome sequence of Saccharomyces cerevisiae: Then and now.</title>
        <authorList>
            <person name="Engel S.R."/>
            <person name="Dietrich F.S."/>
            <person name="Fisk D.G."/>
            <person name="Binkley G."/>
            <person name="Balakrishnan R."/>
            <person name="Costanzo M.C."/>
            <person name="Dwight S.S."/>
            <person name="Hitz B.C."/>
            <person name="Karra K."/>
            <person name="Nash R.S."/>
            <person name="Weng S."/>
            <person name="Wong E.D."/>
            <person name="Lloyd P."/>
            <person name="Skrzypek M.S."/>
            <person name="Miyasato S.R."/>
            <person name="Simison M."/>
            <person name="Cherry J.M."/>
        </authorList>
    </citation>
    <scope>GENOME REANNOTATION</scope>
    <source>
        <strain>ATCC 204508 / S288c</strain>
    </source>
</reference>
<reference key="4">
    <citation type="journal article" date="2007" name="Genome Res.">
        <title>Approaching a complete repository of sequence-verified protein-encoding clones for Saccharomyces cerevisiae.</title>
        <authorList>
            <person name="Hu Y."/>
            <person name="Rolfs A."/>
            <person name="Bhullar B."/>
            <person name="Murthy T.V.S."/>
            <person name="Zhu C."/>
            <person name="Berger M.F."/>
            <person name="Camargo A.A."/>
            <person name="Kelley F."/>
            <person name="McCarron S."/>
            <person name="Jepson D."/>
            <person name="Richardson A."/>
            <person name="Raphael J."/>
            <person name="Moreira D."/>
            <person name="Taycher E."/>
            <person name="Zuo D."/>
            <person name="Mohr S."/>
            <person name="Kane M.F."/>
            <person name="Williamson J."/>
            <person name="Simpson A.J.G."/>
            <person name="Bulyk M.L."/>
            <person name="Harlow E."/>
            <person name="Marsischky G."/>
            <person name="Kolodner R.D."/>
            <person name="LaBaer J."/>
        </authorList>
    </citation>
    <scope>NUCLEOTIDE SEQUENCE [GENOMIC DNA]</scope>
    <source>
        <strain>ATCC 204508 / S288c</strain>
    </source>
</reference>
<reference key="5">
    <citation type="submission" date="2005-06" db="UniProtKB">
        <authorList>
            <person name="Bienvenut W.V."/>
            <person name="Peters C."/>
        </authorList>
    </citation>
    <scope>PROTEIN SEQUENCE OF 240-292 AND 319-334</scope>
    <scope>IDENTIFICATION BY MASS SPECTROMETRY</scope>
</reference>
<reference key="6">
    <citation type="journal article" date="1999" name="J. Biol. Chem.">
        <title>PDR16 and PDR17, two homologous genes of Saccharomyces cerevisiae, affect lipid biosynthesis and resistance to multiple drugs.</title>
        <authorList>
            <person name="van den Hazel H.B."/>
            <person name="Pichler H."/>
            <person name="do Valle Matta M.A."/>
            <person name="Leitner E."/>
            <person name="Goffeau A."/>
            <person name="Daum G."/>
        </authorList>
    </citation>
    <scope>FUNCTION</scope>
</reference>
<reference key="7">
    <citation type="journal article" date="2000" name="Mol. Biol. Cell">
        <title>Identification of a novel family of nonclassic yeast phosphatidylinositol transfer proteins whose function modulates phospholipase D activity and Sec14p-independent cell growth.</title>
        <authorList>
            <person name="Li X."/>
            <person name="Routt S.M."/>
            <person name="Xie Z."/>
            <person name="Cui X."/>
            <person name="Fang M."/>
            <person name="Kearns M.A."/>
            <person name="Bard M."/>
            <person name="Kirsch D.R."/>
            <person name="Bankaitis V.A."/>
        </authorList>
    </citation>
    <scope>FUNCTION</scope>
    <scope>CATALYTIC ACTIVITY</scope>
</reference>
<reference key="8">
    <citation type="journal article" date="2003" name="Eur. J. Biochem.">
        <title>Subcellular localization of yeast Sec14 homologues and their involvement in regulation of phospholipid turnover.</title>
        <authorList>
            <person name="Schnabl M."/>
            <person name="Oskolkova O.V."/>
            <person name="Holic R."/>
            <person name="Brezna B."/>
            <person name="Pichler H."/>
            <person name="Zagorsek M."/>
            <person name="Kohlwein S.D."/>
            <person name="Paltauf F."/>
            <person name="Daum G."/>
            <person name="Griac P."/>
        </authorList>
    </citation>
    <scope>SUBCELLULAR LOCATION</scope>
</reference>
<reference key="9">
    <citation type="journal article" date="2003" name="Nature">
        <title>Global analysis of protein localization in budding yeast.</title>
        <authorList>
            <person name="Huh W.-K."/>
            <person name="Falvo J.V."/>
            <person name="Gerke L.C."/>
            <person name="Carroll A.S."/>
            <person name="Howson R.W."/>
            <person name="Weissman J.S."/>
            <person name="O'Shea E.K."/>
        </authorList>
    </citation>
    <scope>SUBCELLULAR LOCATION [LARGE SCALE ANALYSIS]</scope>
</reference>
<reference key="10">
    <citation type="journal article" date="2003" name="Nature">
        <title>Global analysis of protein expression in yeast.</title>
        <authorList>
            <person name="Ghaemmaghami S."/>
            <person name="Huh W.-K."/>
            <person name="Bower K."/>
            <person name="Howson R.W."/>
            <person name="Belle A."/>
            <person name="Dephoure N."/>
            <person name="O'Shea E.K."/>
            <person name="Weissman J.S."/>
        </authorList>
    </citation>
    <scope>LEVEL OF PROTEIN EXPRESSION [LARGE SCALE ANALYSIS]</scope>
</reference>
<reference key="11">
    <citation type="journal article" date="2007" name="J. Proteome Res.">
        <title>Large-scale phosphorylation analysis of alpha-factor-arrested Saccharomyces cerevisiae.</title>
        <authorList>
            <person name="Li X."/>
            <person name="Gerber S.A."/>
            <person name="Rudner A.D."/>
            <person name="Beausoleil S.A."/>
            <person name="Haas W."/>
            <person name="Villen J."/>
            <person name="Elias J.E."/>
            <person name="Gygi S.P."/>
        </authorList>
    </citation>
    <scope>IDENTIFICATION BY MASS SPECTROMETRY [LARGE SCALE ANALYSIS]</scope>
    <source>
        <strain>ADR376</strain>
    </source>
</reference>
<reference key="12">
    <citation type="journal article" date="2008" name="Mol. Cell. Proteomics">
        <title>A multidimensional chromatography technology for in-depth phosphoproteome analysis.</title>
        <authorList>
            <person name="Albuquerque C.P."/>
            <person name="Smolka M.B."/>
            <person name="Payne S.H."/>
            <person name="Bafna V."/>
            <person name="Eng J."/>
            <person name="Zhou H."/>
        </authorList>
    </citation>
    <scope>IDENTIFICATION BY MASS SPECTROMETRY [LARGE SCALE ANALYSIS]</scope>
</reference>
<reference key="13">
    <citation type="journal article" date="2009" name="Science">
        <title>Global analysis of Cdk1 substrate phosphorylation sites provides insights into evolution.</title>
        <authorList>
            <person name="Holt L.J."/>
            <person name="Tuch B.B."/>
            <person name="Villen J."/>
            <person name="Johnson A.D."/>
            <person name="Gygi S.P."/>
            <person name="Morgan D.O."/>
        </authorList>
    </citation>
    <scope>IDENTIFICATION BY MASS SPECTROMETRY [LARGE SCALE ANALYSIS]</scope>
</reference>
<reference evidence="10" key="14">
    <citation type="journal article" date="2013" name="Acta Crystallogr. D">
        <title>Dimeric Sfh3 has structural changes in its binding pocket that are associated with a dimer-monomer state transformation induced by substrate binding.</title>
        <authorList>
            <person name="Yuan Y."/>
            <person name="Zhao W."/>
            <person name="Wang X."/>
            <person name="Gao Y."/>
            <person name="Niu L."/>
            <person name="Teng M."/>
        </authorList>
    </citation>
    <scope>X-RAY CRYSTALLOGRAPHY (2.34 ANGSTROMS)</scope>
    <scope>SUBUNIT</scope>
</reference>
<reference evidence="11 12" key="15">
    <citation type="journal article" date="2013" name="FEBS Lett.">
        <title>Structural determinants for phosphatidylinositol recognition by Sfh3 and substrate-induced dimer-monomer transition during lipid transfer cycles.</title>
        <authorList>
            <person name="Yang H."/>
            <person name="Tong J."/>
            <person name="Leonard T.A."/>
            <person name="Im Y.J."/>
        </authorList>
    </citation>
    <scope>X-RAY CRYSTALLOGRAPHY (1.55 ANGSTROMS) OF 15-345</scope>
    <scope>SUBUNIT</scope>
</reference>
<reference evidence="13" key="16">
    <citation type="journal article" date="2014" name="Mol. Biol. Cell">
        <title>A phosphatidylinositol transfer protein integrates phosphoinositide signaling with lipid droplet metabolism to regulate a developmental program of nutrient stress-induced membrane biogenesis.</title>
        <authorList>
            <person name="Ren J."/>
            <person name="Pei-Chen Lin C."/>
            <person name="Pathak M.C."/>
            <person name="Temple B.R."/>
            <person name="Nile A.H."/>
            <person name="Mousley C.J."/>
            <person name="Duncan M.C."/>
            <person name="Eckert D.M."/>
            <person name="Leiker T.J."/>
            <person name="Ivanova P.T."/>
            <person name="Myers D.S."/>
            <person name="Murphy R.C."/>
            <person name="Brown H.A."/>
            <person name="Verdaasdonk J."/>
            <person name="Bloom K.S."/>
            <person name="Ortlund E.A."/>
            <person name="Neiman A.M."/>
            <person name="Bankaitis V.A."/>
        </authorList>
    </citation>
    <scope>X-RAY CRYSTALLOGRAPHY (1.93 ANGSTROMS)</scope>
    <scope>FUNCTION</scope>
    <scope>SUBCELLULAR LOCATION</scope>
</reference>
<comment type="function">
    <text evidence="2 7 8">Has phosphatidylinositol transfer activity. Involved in the regulation of the phospholipid composition of plasma- and endomembranes. Altering plasma membrane composition may provide a possible mechanism for multidrug resistance. Involved in the regulation of sterol biosynthesis. Contributes to efficient phospholipase D1 activation in the regulation of phospholipid turnover. Regulates the release of fatty acids from lipid droplets (PubMed:24403601).</text>
</comment>
<comment type="catalytic activity">
    <reaction evidence="2">
        <text>a 1,2-diacyl-sn-glycero-3-phospho-(1D-myo-inositol)(in) = a 1,2-diacyl-sn-glycero-3-phospho-(1D-myo-inositol)(out)</text>
        <dbReference type="Rhea" id="RHEA:38691"/>
        <dbReference type="ChEBI" id="CHEBI:57880"/>
    </reaction>
    <physiologicalReaction direction="left-to-right" evidence="2">
        <dbReference type="Rhea" id="RHEA:38692"/>
    </physiologicalReaction>
</comment>
<comment type="subunit">
    <text evidence="5 6">Homodimer (PubMed:23519406). Apo-SFH3 forms a dimer through the hydrophobic interaction of gating helices. Binding of phosphatidylinositol leads to dissociation of the dimer into monomers in a reversible manner (PubMed:23603387).</text>
</comment>
<comment type="interaction">
    <interactant intactId="EBI-29195">
        <id>P53860</id>
    </interactant>
    <interactant intactId="EBI-29195">
        <id>P53860</id>
        <label>PDR16</label>
    </interactant>
    <organismsDiffer>false</organismsDiffer>
    <experiments>2</experiments>
</comment>
<comment type="subcellular location">
    <subcellularLocation>
        <location evidence="3 7">Lipid droplet</location>
    </subcellularLocation>
    <subcellularLocation>
        <location evidence="3">Microsome membrane</location>
        <topology>Peripheral membrane protein</topology>
    </subcellularLocation>
    <subcellularLocation>
        <location>Endoplasmic reticulum membrane</location>
        <topology evidence="9">Peripheral membrane protein</topology>
    </subcellularLocation>
</comment>
<comment type="miscellaneous">
    <text evidence="4">Present with 15361 molecules/cell in log phase SD medium.</text>
</comment>
<accession>P53860</accession>
<accession>D6W0W1</accession>
<evidence type="ECO:0000255" key="1">
    <source>
        <dbReference type="PROSITE-ProRule" id="PRU00056"/>
    </source>
</evidence>
<evidence type="ECO:0000269" key="2">
    <source>
    </source>
</evidence>
<evidence type="ECO:0000269" key="3">
    <source>
    </source>
</evidence>
<evidence type="ECO:0000269" key="4">
    <source>
    </source>
</evidence>
<evidence type="ECO:0000269" key="5">
    <source>
    </source>
</evidence>
<evidence type="ECO:0000269" key="6">
    <source>
    </source>
</evidence>
<evidence type="ECO:0000269" key="7">
    <source>
    </source>
</evidence>
<evidence type="ECO:0000269" key="8">
    <source>
    </source>
</evidence>
<evidence type="ECO:0000305" key="9"/>
<evidence type="ECO:0007744" key="10">
    <source>
        <dbReference type="PDB" id="4FMM"/>
    </source>
</evidence>
<evidence type="ECO:0007744" key="11">
    <source>
        <dbReference type="PDB" id="4J7P"/>
    </source>
</evidence>
<evidence type="ECO:0007744" key="12">
    <source>
        <dbReference type="PDB" id="4J7Q"/>
    </source>
</evidence>
<evidence type="ECO:0007744" key="13">
    <source>
        <dbReference type="PDB" id="4M8Z"/>
    </source>
</evidence>
<evidence type="ECO:0007829" key="14">
    <source>
        <dbReference type="PDB" id="4FMM"/>
    </source>
</evidence>
<evidence type="ECO:0007829" key="15">
    <source>
        <dbReference type="PDB" id="4J7Q"/>
    </source>
</evidence>
<evidence type="ECO:0007829" key="16">
    <source>
        <dbReference type="PDB" id="4M8Z"/>
    </source>
</evidence>
<gene>
    <name type="primary">PDR16</name>
    <name type="synonym">SFH3</name>
    <name type="ordered locus">YNL231C</name>
    <name type="ORF">N1158</name>
</gene>
<proteinExistence type="evidence at protein level"/>
<dbReference type="EMBL" id="Z69381">
    <property type="protein sequence ID" value="CAA93367.1"/>
    <property type="molecule type" value="Genomic_DNA"/>
</dbReference>
<dbReference type="EMBL" id="Z71507">
    <property type="protein sequence ID" value="CAA96136.1"/>
    <property type="molecule type" value="Genomic_DNA"/>
</dbReference>
<dbReference type="EMBL" id="AY558020">
    <property type="protein sequence ID" value="AAS56346.1"/>
    <property type="molecule type" value="Genomic_DNA"/>
</dbReference>
<dbReference type="EMBL" id="BK006947">
    <property type="protein sequence ID" value="DAA10327.1"/>
    <property type="molecule type" value="Genomic_DNA"/>
</dbReference>
<dbReference type="PIR" id="S63197">
    <property type="entry name" value="S63197"/>
</dbReference>
<dbReference type="RefSeq" id="NP_014168.1">
    <property type="nucleotide sequence ID" value="NM_001183069.1"/>
</dbReference>
<dbReference type="PDB" id="4FMM">
    <property type="method" value="X-ray"/>
    <property type="resolution" value="2.34 A"/>
    <property type="chains" value="A/B=1-351"/>
</dbReference>
<dbReference type="PDB" id="4J7P">
    <property type="method" value="X-ray"/>
    <property type="resolution" value="2.00 A"/>
    <property type="chains" value="A/B=2-351"/>
</dbReference>
<dbReference type="PDB" id="4J7Q">
    <property type="method" value="X-ray"/>
    <property type="resolution" value="1.55 A"/>
    <property type="chains" value="A/B=15-345"/>
</dbReference>
<dbReference type="PDB" id="4M8Z">
    <property type="method" value="X-ray"/>
    <property type="resolution" value="1.93 A"/>
    <property type="chains" value="A/B=1-351"/>
</dbReference>
<dbReference type="PDBsum" id="4FMM"/>
<dbReference type="PDBsum" id="4J7P"/>
<dbReference type="PDBsum" id="4J7Q"/>
<dbReference type="PDBsum" id="4M8Z"/>
<dbReference type="SMR" id="P53860"/>
<dbReference type="BioGRID" id="35607">
    <property type="interactions" value="82"/>
</dbReference>
<dbReference type="ComplexPortal" id="CPX-2148">
    <property type="entry name" value="Phosphatidylinositol transporter complex"/>
</dbReference>
<dbReference type="DIP" id="DIP-5449N"/>
<dbReference type="FunCoup" id="P53860">
    <property type="interactions" value="178"/>
</dbReference>
<dbReference type="IntAct" id="P53860">
    <property type="interactions" value="35"/>
</dbReference>
<dbReference type="MINT" id="P53860"/>
<dbReference type="STRING" id="4932.YNL231C"/>
<dbReference type="SwissLipids" id="SLP:000000356"/>
<dbReference type="iPTMnet" id="P53860"/>
<dbReference type="PaxDb" id="4932-YNL231C"/>
<dbReference type="PeptideAtlas" id="P53860"/>
<dbReference type="EnsemblFungi" id="YNL231C_mRNA">
    <property type="protein sequence ID" value="YNL231C"/>
    <property type="gene ID" value="YNL231C"/>
</dbReference>
<dbReference type="GeneID" id="855490"/>
<dbReference type="KEGG" id="sce:YNL231C"/>
<dbReference type="AGR" id="SGD:S000005175"/>
<dbReference type="SGD" id="S000005175">
    <property type="gene designation" value="PDR16"/>
</dbReference>
<dbReference type="VEuPathDB" id="FungiDB:YNL231C"/>
<dbReference type="eggNOG" id="KOG1470">
    <property type="taxonomic scope" value="Eukaryota"/>
</dbReference>
<dbReference type="GeneTree" id="ENSGT00940000176626"/>
<dbReference type="HOGENOM" id="CLU_014001_1_1_1"/>
<dbReference type="InParanoid" id="P53860"/>
<dbReference type="OMA" id="DIHARPC"/>
<dbReference type="OrthoDB" id="75724at2759"/>
<dbReference type="BioCyc" id="YEAST:G3O-33231-MONOMER"/>
<dbReference type="BioGRID-ORCS" id="855490">
    <property type="hits" value="1 hit in 10 CRISPR screens"/>
</dbReference>
<dbReference type="EvolutionaryTrace" id="P53860"/>
<dbReference type="PRO" id="PR:P53860"/>
<dbReference type="Proteomes" id="UP000002311">
    <property type="component" value="Chromosome XIV"/>
</dbReference>
<dbReference type="RNAct" id="P53860">
    <property type="molecule type" value="protein"/>
</dbReference>
<dbReference type="GO" id="GO:0071944">
    <property type="term" value="C:cell periphery"/>
    <property type="evidence" value="ECO:0000314"/>
    <property type="project" value="SGD"/>
</dbReference>
<dbReference type="GO" id="GO:0005737">
    <property type="term" value="C:cytoplasm"/>
    <property type="evidence" value="ECO:0007005"/>
    <property type="project" value="SGD"/>
</dbReference>
<dbReference type="GO" id="GO:0005829">
    <property type="term" value="C:cytosol"/>
    <property type="evidence" value="ECO:0007005"/>
    <property type="project" value="SGD"/>
</dbReference>
<dbReference type="GO" id="GO:0005789">
    <property type="term" value="C:endoplasmic reticulum membrane"/>
    <property type="evidence" value="ECO:0007669"/>
    <property type="project" value="UniProtKB-SubCell"/>
</dbReference>
<dbReference type="GO" id="GO:0005811">
    <property type="term" value="C:lipid droplet"/>
    <property type="evidence" value="ECO:0000314"/>
    <property type="project" value="SGD"/>
</dbReference>
<dbReference type="GO" id="GO:0071561">
    <property type="term" value="C:nucleus-vacuole junction"/>
    <property type="evidence" value="ECO:0000314"/>
    <property type="project" value="SGD"/>
</dbReference>
<dbReference type="GO" id="GO:1902556">
    <property type="term" value="C:phosphatidylinositol transporter complex"/>
    <property type="evidence" value="ECO:0000353"/>
    <property type="project" value="ComplexPortal"/>
</dbReference>
<dbReference type="GO" id="GO:0005886">
    <property type="term" value="C:plasma membrane"/>
    <property type="evidence" value="ECO:0007005"/>
    <property type="project" value="SGD"/>
</dbReference>
<dbReference type="GO" id="GO:0042802">
    <property type="term" value="F:identical protein binding"/>
    <property type="evidence" value="ECO:0000353"/>
    <property type="project" value="IntAct"/>
</dbReference>
<dbReference type="GO" id="GO:0008526">
    <property type="term" value="F:phosphatidylinositol transfer activity"/>
    <property type="evidence" value="ECO:0000314"/>
    <property type="project" value="SGD"/>
</dbReference>
<dbReference type="GO" id="GO:0032934">
    <property type="term" value="F:sterol binding"/>
    <property type="evidence" value="ECO:0000314"/>
    <property type="project" value="SGD"/>
</dbReference>
<dbReference type="GO" id="GO:0043942">
    <property type="term" value="P:negative regulation of sexual sporulation resulting in formation of a cellular spore"/>
    <property type="evidence" value="ECO:0000315"/>
    <property type="project" value="SGD"/>
</dbReference>
<dbReference type="GO" id="GO:0008654">
    <property type="term" value="P:phospholipid biosynthetic process"/>
    <property type="evidence" value="ECO:0000316"/>
    <property type="project" value="SGD"/>
</dbReference>
<dbReference type="GO" id="GO:0015914">
    <property type="term" value="P:phospholipid transport"/>
    <property type="evidence" value="ECO:0000314"/>
    <property type="project" value="SGD"/>
</dbReference>
<dbReference type="GO" id="GO:0009410">
    <property type="term" value="P:response to xenobiotic stimulus"/>
    <property type="evidence" value="ECO:0000316"/>
    <property type="project" value="SGD"/>
</dbReference>
<dbReference type="GO" id="GO:0016126">
    <property type="term" value="P:sterol biosynthetic process"/>
    <property type="evidence" value="ECO:0000316"/>
    <property type="project" value="SGD"/>
</dbReference>
<dbReference type="CDD" id="cd00170">
    <property type="entry name" value="SEC14"/>
    <property type="match status" value="1"/>
</dbReference>
<dbReference type="FunFam" id="3.40.525.10:FF:000013">
    <property type="entry name" value="Phosphatidylinositol transfer protein PDR16"/>
    <property type="match status" value="1"/>
</dbReference>
<dbReference type="Gene3D" id="3.40.525.10">
    <property type="entry name" value="CRAL-TRIO lipid binding domain"/>
    <property type="match status" value="1"/>
</dbReference>
<dbReference type="InterPro" id="IPR001251">
    <property type="entry name" value="CRAL-TRIO_dom"/>
</dbReference>
<dbReference type="InterPro" id="IPR036865">
    <property type="entry name" value="CRAL-TRIO_dom_sf"/>
</dbReference>
<dbReference type="InterPro" id="IPR011074">
    <property type="entry name" value="CRAL/TRIO_N_dom"/>
</dbReference>
<dbReference type="InterPro" id="IPR036273">
    <property type="entry name" value="CRAL/TRIO_N_dom_sf"/>
</dbReference>
<dbReference type="InterPro" id="IPR052578">
    <property type="entry name" value="PI_Transfer_CRAL-TRIO"/>
</dbReference>
<dbReference type="PANTHER" id="PTHR45824">
    <property type="entry name" value="GH16843P"/>
    <property type="match status" value="1"/>
</dbReference>
<dbReference type="PANTHER" id="PTHR45824:SF29">
    <property type="entry name" value="GH16843P"/>
    <property type="match status" value="1"/>
</dbReference>
<dbReference type="Pfam" id="PF00650">
    <property type="entry name" value="CRAL_TRIO"/>
    <property type="match status" value="1"/>
</dbReference>
<dbReference type="Pfam" id="PF03765">
    <property type="entry name" value="CRAL_TRIO_N"/>
    <property type="match status" value="1"/>
</dbReference>
<dbReference type="SMART" id="SM01100">
    <property type="entry name" value="CRAL_TRIO_N"/>
    <property type="match status" value="1"/>
</dbReference>
<dbReference type="SMART" id="SM00516">
    <property type="entry name" value="SEC14"/>
    <property type="match status" value="1"/>
</dbReference>
<dbReference type="SUPFAM" id="SSF52087">
    <property type="entry name" value="CRAL/TRIO domain"/>
    <property type="match status" value="1"/>
</dbReference>
<dbReference type="SUPFAM" id="SSF46938">
    <property type="entry name" value="CRAL/TRIO N-terminal domain"/>
    <property type="match status" value="1"/>
</dbReference>
<dbReference type="PROSITE" id="PS50191">
    <property type="entry name" value="CRAL_TRIO"/>
    <property type="match status" value="1"/>
</dbReference>
<name>PDR16_YEAST</name>
<sequence length="351" mass="40714">MFKRFSKKKEAPEDPKNLINIDKPIKELPASIAIPKEKPLTGEQQKMYDEVLKHFSNPDLKVYTSEKNKSEDDLKPLEEEEKAWLTRECFLRYLRATKWVLKDCIDRITMTLAWRREFGISHLGEEHGDKITADLVAVENESGKQVILGYENDARPILYLKPGRQNTKTSHRQVQHLVFMLERVIDFMPAGQDSLALLIDFKDYPDVPKVPGNSKIPPIGVGKEVLHILQTHYPERLGKALLTNIPWLAWTFLKLIHPFIDPLTREKLVFDEPFVKYVPKNELDSLYGGDLKFKYNHDVYWPALVETAREKRDHYFKRFQSFGGIVGLSEVDLRGTHEKLLYPVKSESSTV</sequence>
<feature type="chain" id="PRO_0000210745" description="Phosphatidylinositol transfer protein PDR16">
    <location>
        <begin position="1"/>
        <end position="351"/>
    </location>
</feature>
<feature type="domain" description="CRAL-TRIO" evidence="1">
    <location>
        <begin position="135"/>
        <end position="295"/>
    </location>
</feature>
<feature type="strand" evidence="15">
    <location>
        <begin position="19"/>
        <end position="21"/>
    </location>
</feature>
<feature type="helix" evidence="15">
    <location>
        <begin position="42"/>
        <end position="56"/>
    </location>
</feature>
<feature type="strand" evidence="15">
    <location>
        <begin position="61"/>
        <end position="64"/>
    </location>
</feature>
<feature type="strand" evidence="15">
    <location>
        <begin position="74"/>
        <end position="76"/>
    </location>
</feature>
<feature type="helix" evidence="15">
    <location>
        <begin position="79"/>
        <end position="84"/>
    </location>
</feature>
<feature type="helix" evidence="15">
    <location>
        <begin position="87"/>
        <end position="96"/>
    </location>
</feature>
<feature type="turn" evidence="16">
    <location>
        <begin position="97"/>
        <end position="99"/>
    </location>
</feature>
<feature type="helix" evidence="15">
    <location>
        <begin position="101"/>
        <end position="118"/>
    </location>
</feature>
<feature type="helix" evidence="15">
    <location>
        <begin position="125"/>
        <end position="127"/>
    </location>
</feature>
<feature type="helix" evidence="15">
    <location>
        <begin position="133"/>
        <end position="136"/>
    </location>
</feature>
<feature type="helix" evidence="15">
    <location>
        <begin position="137"/>
        <end position="140"/>
    </location>
</feature>
<feature type="strand" evidence="15">
    <location>
        <begin position="144"/>
        <end position="150"/>
    </location>
</feature>
<feature type="strand" evidence="15">
    <location>
        <begin position="156"/>
        <end position="160"/>
    </location>
</feature>
<feature type="helix" evidence="15">
    <location>
        <begin position="162"/>
        <end position="164"/>
    </location>
</feature>
<feature type="helix" evidence="15">
    <location>
        <begin position="171"/>
        <end position="186"/>
    </location>
</feature>
<feature type="strand" evidence="15">
    <location>
        <begin position="195"/>
        <end position="200"/>
    </location>
</feature>
<feature type="helix" evidence="15">
    <location>
        <begin position="221"/>
        <end position="231"/>
    </location>
</feature>
<feature type="strand" evidence="15">
    <location>
        <begin position="237"/>
        <end position="244"/>
    </location>
</feature>
<feature type="helix" evidence="15">
    <location>
        <begin position="247"/>
        <end position="256"/>
    </location>
</feature>
<feature type="helix" evidence="15">
    <location>
        <begin position="257"/>
        <end position="259"/>
    </location>
</feature>
<feature type="helix" evidence="15">
    <location>
        <begin position="262"/>
        <end position="265"/>
    </location>
</feature>
<feature type="strand" evidence="14">
    <location>
        <begin position="268"/>
        <end position="272"/>
    </location>
</feature>
<feature type="helix" evidence="15">
    <location>
        <begin position="274"/>
        <end position="276"/>
    </location>
</feature>
<feature type="helix" evidence="15">
    <location>
        <begin position="280"/>
        <end position="282"/>
    </location>
</feature>
<feature type="helix" evidence="15">
    <location>
        <begin position="285"/>
        <end position="287"/>
    </location>
</feature>
<feature type="strand" evidence="15">
    <location>
        <begin position="289"/>
        <end position="293"/>
    </location>
</feature>
<feature type="helix" evidence="15">
    <location>
        <begin position="297"/>
        <end position="321"/>
    </location>
</feature>
<feature type="helix" evidence="15">
    <location>
        <begin position="330"/>
        <end position="333"/>
    </location>
</feature>
<keyword id="KW-0002">3D-structure</keyword>
<keyword id="KW-0903">Direct protein sequencing</keyword>
<keyword id="KW-0256">Endoplasmic reticulum</keyword>
<keyword id="KW-0551">Lipid droplet</keyword>
<keyword id="KW-0445">Lipid transport</keyword>
<keyword id="KW-0472">Membrane</keyword>
<keyword id="KW-0492">Microsome</keyword>
<keyword id="KW-1185">Reference proteome</keyword>
<keyword id="KW-0813">Transport</keyword>
<organism>
    <name type="scientific">Saccharomyces cerevisiae (strain ATCC 204508 / S288c)</name>
    <name type="common">Baker's yeast</name>
    <dbReference type="NCBI Taxonomy" id="559292"/>
    <lineage>
        <taxon>Eukaryota</taxon>
        <taxon>Fungi</taxon>
        <taxon>Dikarya</taxon>
        <taxon>Ascomycota</taxon>
        <taxon>Saccharomycotina</taxon>
        <taxon>Saccharomycetes</taxon>
        <taxon>Saccharomycetales</taxon>
        <taxon>Saccharomycetaceae</taxon>
        <taxon>Saccharomyces</taxon>
    </lineage>
</organism>
<protein>
    <recommendedName>
        <fullName>Phosphatidylinositol transfer protein PDR16</fullName>
        <shortName>PITP</shortName>
    </recommendedName>
    <alternativeName>
        <fullName>Pleiotropic drug resistance protein 16</fullName>
    </alternativeName>
    <alternativeName>
        <fullName>SEC14 homolog 3</fullName>
    </alternativeName>
</protein>